<dbReference type="EC" id="3.6.5.-" evidence="1"/>
<dbReference type="EMBL" id="CP000023">
    <property type="protein sequence ID" value="AAV61107.1"/>
    <property type="molecule type" value="Genomic_DNA"/>
</dbReference>
<dbReference type="SMR" id="Q5M3C8"/>
<dbReference type="STRING" id="264199.stu1504"/>
<dbReference type="KEGG" id="stl:stu1504"/>
<dbReference type="eggNOG" id="COG0536">
    <property type="taxonomic scope" value="Bacteria"/>
</dbReference>
<dbReference type="HOGENOM" id="CLU_011747_2_1_9"/>
<dbReference type="Proteomes" id="UP000001170">
    <property type="component" value="Chromosome"/>
</dbReference>
<dbReference type="GO" id="GO:0005737">
    <property type="term" value="C:cytoplasm"/>
    <property type="evidence" value="ECO:0007669"/>
    <property type="project" value="UniProtKB-SubCell"/>
</dbReference>
<dbReference type="GO" id="GO:0005525">
    <property type="term" value="F:GTP binding"/>
    <property type="evidence" value="ECO:0007669"/>
    <property type="project" value="UniProtKB-UniRule"/>
</dbReference>
<dbReference type="GO" id="GO:0003924">
    <property type="term" value="F:GTPase activity"/>
    <property type="evidence" value="ECO:0007669"/>
    <property type="project" value="UniProtKB-UniRule"/>
</dbReference>
<dbReference type="GO" id="GO:0000287">
    <property type="term" value="F:magnesium ion binding"/>
    <property type="evidence" value="ECO:0007669"/>
    <property type="project" value="InterPro"/>
</dbReference>
<dbReference type="GO" id="GO:0042254">
    <property type="term" value="P:ribosome biogenesis"/>
    <property type="evidence" value="ECO:0007669"/>
    <property type="project" value="UniProtKB-UniRule"/>
</dbReference>
<dbReference type="CDD" id="cd01898">
    <property type="entry name" value="Obg"/>
    <property type="match status" value="1"/>
</dbReference>
<dbReference type="FunFam" id="2.70.210.12:FF:000001">
    <property type="entry name" value="GTPase Obg"/>
    <property type="match status" value="1"/>
</dbReference>
<dbReference type="FunFam" id="3.40.50.300:FF:000515">
    <property type="entry name" value="GTPase Obg"/>
    <property type="match status" value="1"/>
</dbReference>
<dbReference type="Gene3D" id="3.30.300.350">
    <property type="entry name" value="GTP-binding protein OBG, C-terminal domain"/>
    <property type="match status" value="1"/>
</dbReference>
<dbReference type="Gene3D" id="2.70.210.12">
    <property type="entry name" value="GTP1/OBG domain"/>
    <property type="match status" value="1"/>
</dbReference>
<dbReference type="Gene3D" id="3.40.50.300">
    <property type="entry name" value="P-loop containing nucleotide triphosphate hydrolases"/>
    <property type="match status" value="1"/>
</dbReference>
<dbReference type="HAMAP" id="MF_01454">
    <property type="entry name" value="GTPase_Obg"/>
    <property type="match status" value="1"/>
</dbReference>
<dbReference type="InterPro" id="IPR031167">
    <property type="entry name" value="G_OBG"/>
</dbReference>
<dbReference type="InterPro" id="IPR006073">
    <property type="entry name" value="GTP-bd"/>
</dbReference>
<dbReference type="InterPro" id="IPR014100">
    <property type="entry name" value="GTP-bd_Obg/CgtA"/>
</dbReference>
<dbReference type="InterPro" id="IPR036346">
    <property type="entry name" value="GTP-bd_prot_GTP1/OBG_C_sf"/>
</dbReference>
<dbReference type="InterPro" id="IPR006074">
    <property type="entry name" value="GTP1-OBG_CS"/>
</dbReference>
<dbReference type="InterPro" id="IPR006169">
    <property type="entry name" value="GTP1_OBG_dom"/>
</dbReference>
<dbReference type="InterPro" id="IPR036726">
    <property type="entry name" value="GTP1_OBG_dom_sf"/>
</dbReference>
<dbReference type="InterPro" id="IPR045086">
    <property type="entry name" value="OBG_GTPase"/>
</dbReference>
<dbReference type="InterPro" id="IPR015349">
    <property type="entry name" value="OCT_dom"/>
</dbReference>
<dbReference type="InterPro" id="IPR027417">
    <property type="entry name" value="P-loop_NTPase"/>
</dbReference>
<dbReference type="InterPro" id="IPR005225">
    <property type="entry name" value="Small_GTP-bd"/>
</dbReference>
<dbReference type="NCBIfam" id="TIGR02729">
    <property type="entry name" value="Obg_CgtA"/>
    <property type="match status" value="1"/>
</dbReference>
<dbReference type="NCBIfam" id="TIGR03595">
    <property type="entry name" value="Obg_CgtA_exten"/>
    <property type="match status" value="1"/>
</dbReference>
<dbReference type="NCBIfam" id="NF008954">
    <property type="entry name" value="PRK12296.1"/>
    <property type="match status" value="1"/>
</dbReference>
<dbReference type="NCBIfam" id="NF008955">
    <property type="entry name" value="PRK12297.1"/>
    <property type="match status" value="1"/>
</dbReference>
<dbReference type="NCBIfam" id="NF008956">
    <property type="entry name" value="PRK12299.1"/>
    <property type="match status" value="1"/>
</dbReference>
<dbReference type="NCBIfam" id="TIGR00231">
    <property type="entry name" value="small_GTP"/>
    <property type="match status" value="1"/>
</dbReference>
<dbReference type="PANTHER" id="PTHR11702">
    <property type="entry name" value="DEVELOPMENTALLY REGULATED GTP-BINDING PROTEIN-RELATED"/>
    <property type="match status" value="1"/>
</dbReference>
<dbReference type="PANTHER" id="PTHR11702:SF31">
    <property type="entry name" value="MITOCHONDRIAL RIBOSOME-ASSOCIATED GTPASE 2"/>
    <property type="match status" value="1"/>
</dbReference>
<dbReference type="Pfam" id="PF09269">
    <property type="entry name" value="DUF1967"/>
    <property type="match status" value="1"/>
</dbReference>
<dbReference type="Pfam" id="PF01018">
    <property type="entry name" value="GTP1_OBG"/>
    <property type="match status" value="1"/>
</dbReference>
<dbReference type="Pfam" id="PF01926">
    <property type="entry name" value="MMR_HSR1"/>
    <property type="match status" value="1"/>
</dbReference>
<dbReference type="PIRSF" id="PIRSF002401">
    <property type="entry name" value="GTP_bd_Obg/CgtA"/>
    <property type="match status" value="1"/>
</dbReference>
<dbReference type="PRINTS" id="PR00326">
    <property type="entry name" value="GTP1OBG"/>
</dbReference>
<dbReference type="SUPFAM" id="SSF102741">
    <property type="entry name" value="Obg GTP-binding protein C-terminal domain"/>
    <property type="match status" value="1"/>
</dbReference>
<dbReference type="SUPFAM" id="SSF82051">
    <property type="entry name" value="Obg GTP-binding protein N-terminal domain"/>
    <property type="match status" value="1"/>
</dbReference>
<dbReference type="SUPFAM" id="SSF52540">
    <property type="entry name" value="P-loop containing nucleoside triphosphate hydrolases"/>
    <property type="match status" value="1"/>
</dbReference>
<dbReference type="PROSITE" id="PS51710">
    <property type="entry name" value="G_OBG"/>
    <property type="match status" value="1"/>
</dbReference>
<dbReference type="PROSITE" id="PS00905">
    <property type="entry name" value="GTP1_OBG"/>
    <property type="match status" value="1"/>
</dbReference>
<dbReference type="PROSITE" id="PS51883">
    <property type="entry name" value="OBG"/>
    <property type="match status" value="1"/>
</dbReference>
<dbReference type="PROSITE" id="PS51881">
    <property type="entry name" value="OCT"/>
    <property type="match status" value="1"/>
</dbReference>
<comment type="function">
    <text evidence="1">An essential GTPase which binds GTP, GDP and possibly (p)ppGpp with moderate affinity, with high nucleotide exchange rates and a fairly low GTP hydrolysis rate. Plays a role in control of the cell cycle, stress response, ribosome biogenesis and in those bacteria that undergo differentiation, in morphogenesis control.</text>
</comment>
<comment type="cofactor">
    <cofactor evidence="1">
        <name>Mg(2+)</name>
        <dbReference type="ChEBI" id="CHEBI:18420"/>
    </cofactor>
</comment>
<comment type="subunit">
    <text evidence="1">Monomer.</text>
</comment>
<comment type="subcellular location">
    <subcellularLocation>
        <location evidence="1">Cytoplasm</location>
    </subcellularLocation>
</comment>
<comment type="similarity">
    <text evidence="1">Belongs to the TRAFAC class OBG-HflX-like GTPase superfamily. OBG GTPase family.</text>
</comment>
<protein>
    <recommendedName>
        <fullName evidence="1">GTPase Obg</fullName>
        <ecNumber evidence="1">3.6.5.-</ecNumber>
    </recommendedName>
    <alternativeName>
        <fullName evidence="1">GTP-binding protein Obg</fullName>
    </alternativeName>
</protein>
<accession>Q5M3C8</accession>
<evidence type="ECO:0000255" key="1">
    <source>
        <dbReference type="HAMAP-Rule" id="MF_01454"/>
    </source>
</evidence>
<evidence type="ECO:0000255" key="2">
    <source>
        <dbReference type="PROSITE-ProRule" id="PRU01229"/>
    </source>
</evidence>
<evidence type="ECO:0000255" key="3">
    <source>
        <dbReference type="PROSITE-ProRule" id="PRU01231"/>
    </source>
</evidence>
<evidence type="ECO:0000256" key="4">
    <source>
        <dbReference type="SAM" id="MobiDB-lite"/>
    </source>
</evidence>
<sequence length="437" mass="48637">MSMFLDTAKISVQAGRGGDGMVAFRREKYVPNGGPWGGDGGKGGSVIFKVDEGLRTLMDFRYNRKFKAKNGEKGMTKGMHGRGAEDLIVSIPPGTTVRDAETGKVITDMVEDGQEFVVAHGGRGGRGNIRFATPRNPAPEIAENGEPGEERELQLELKILADVGLVGFPSVGKSTILSVVTAAKPKIGAYHFTTIVPNLGMVRTKSGESFAMADLPGLIEGASQGVGLGTQFLRHIERTRVILHVIDMSASEGRDPYEDYLQINKELETYNLRLMERPQIIVANKMDMPEAEENLKEFKEKLAANYDEFDELPQIFPISSLAHQGLENLLEATAELLDQTDEFLLYNEDDMEQEEVYYGFNEEERPFEISRDDDASWVLSGEKLEKLFVMTNMERDESIMKFARQLRGMGVDEALRERGAKDGDIVRIGNFEFEFVD</sequence>
<name>OBG_STRT2</name>
<keyword id="KW-0963">Cytoplasm</keyword>
<keyword id="KW-0342">GTP-binding</keyword>
<keyword id="KW-0378">Hydrolase</keyword>
<keyword id="KW-0460">Magnesium</keyword>
<keyword id="KW-0479">Metal-binding</keyword>
<keyword id="KW-0547">Nucleotide-binding</keyword>
<keyword id="KW-1185">Reference proteome</keyword>
<gene>
    <name evidence="1" type="primary">obg</name>
    <name type="ordered locus">stu1504</name>
</gene>
<organism>
    <name type="scientific">Streptococcus thermophilus (strain ATCC BAA-250 / LMG 18311)</name>
    <dbReference type="NCBI Taxonomy" id="264199"/>
    <lineage>
        <taxon>Bacteria</taxon>
        <taxon>Bacillati</taxon>
        <taxon>Bacillota</taxon>
        <taxon>Bacilli</taxon>
        <taxon>Lactobacillales</taxon>
        <taxon>Streptococcaceae</taxon>
        <taxon>Streptococcus</taxon>
    </lineage>
</organism>
<reference key="1">
    <citation type="journal article" date="2004" name="Nat. Biotechnol.">
        <title>Complete sequence and comparative genome analysis of the dairy bacterium Streptococcus thermophilus.</title>
        <authorList>
            <person name="Bolotin A."/>
            <person name="Quinquis B."/>
            <person name="Renault P."/>
            <person name="Sorokin A."/>
            <person name="Ehrlich S.D."/>
            <person name="Kulakauskas S."/>
            <person name="Lapidus A."/>
            <person name="Goltsman E."/>
            <person name="Mazur M."/>
            <person name="Pusch G.D."/>
            <person name="Fonstein M."/>
            <person name="Overbeek R."/>
            <person name="Kyprides N."/>
            <person name="Purnelle B."/>
            <person name="Prozzi D."/>
            <person name="Ngui K."/>
            <person name="Masuy D."/>
            <person name="Hancy F."/>
            <person name="Burteau S."/>
            <person name="Boutry M."/>
            <person name="Delcour J."/>
            <person name="Goffeau A."/>
            <person name="Hols P."/>
        </authorList>
    </citation>
    <scope>NUCLEOTIDE SEQUENCE [LARGE SCALE GENOMIC DNA]</scope>
    <source>
        <strain>ATCC BAA-250 / LMG 18311</strain>
    </source>
</reference>
<feature type="chain" id="PRO_0000386318" description="GTPase Obg">
    <location>
        <begin position="1"/>
        <end position="437"/>
    </location>
</feature>
<feature type="domain" description="Obg" evidence="3">
    <location>
        <begin position="2"/>
        <end position="160"/>
    </location>
</feature>
<feature type="domain" description="OBG-type G" evidence="1">
    <location>
        <begin position="161"/>
        <end position="338"/>
    </location>
</feature>
<feature type="domain" description="OCT" evidence="2">
    <location>
        <begin position="359"/>
        <end position="437"/>
    </location>
</feature>
<feature type="region of interest" description="Disordered" evidence="4">
    <location>
        <begin position="127"/>
        <end position="146"/>
    </location>
</feature>
<feature type="binding site" evidence="1">
    <location>
        <begin position="167"/>
        <end position="174"/>
    </location>
    <ligand>
        <name>GTP</name>
        <dbReference type="ChEBI" id="CHEBI:37565"/>
    </ligand>
</feature>
<feature type="binding site" evidence="1">
    <location>
        <position position="174"/>
    </location>
    <ligand>
        <name>Mg(2+)</name>
        <dbReference type="ChEBI" id="CHEBI:18420"/>
    </ligand>
</feature>
<feature type="binding site" evidence="1">
    <location>
        <begin position="192"/>
        <end position="196"/>
    </location>
    <ligand>
        <name>GTP</name>
        <dbReference type="ChEBI" id="CHEBI:37565"/>
    </ligand>
</feature>
<feature type="binding site" evidence="1">
    <location>
        <position position="194"/>
    </location>
    <ligand>
        <name>Mg(2+)</name>
        <dbReference type="ChEBI" id="CHEBI:18420"/>
    </ligand>
</feature>
<feature type="binding site" evidence="1">
    <location>
        <begin position="214"/>
        <end position="217"/>
    </location>
    <ligand>
        <name>GTP</name>
        <dbReference type="ChEBI" id="CHEBI:37565"/>
    </ligand>
</feature>
<feature type="binding site" evidence="1">
    <location>
        <begin position="284"/>
        <end position="287"/>
    </location>
    <ligand>
        <name>GTP</name>
        <dbReference type="ChEBI" id="CHEBI:37565"/>
    </ligand>
</feature>
<feature type="binding site" evidence="1">
    <location>
        <begin position="319"/>
        <end position="321"/>
    </location>
    <ligand>
        <name>GTP</name>
        <dbReference type="ChEBI" id="CHEBI:37565"/>
    </ligand>
</feature>
<proteinExistence type="inferred from homology"/>